<evidence type="ECO:0000250" key="1">
    <source>
        <dbReference type="UniProtKB" id="Q9UR08"/>
    </source>
</evidence>
<evidence type="ECO:0000256" key="2">
    <source>
        <dbReference type="SAM" id="MobiDB-lite"/>
    </source>
</evidence>
<evidence type="ECO:0000269" key="3">
    <source>
    </source>
</evidence>
<evidence type="ECO:0000303" key="4">
    <source>
    </source>
</evidence>
<evidence type="ECO:0000305" key="5"/>
<evidence type="ECO:0000305" key="6">
    <source>
    </source>
</evidence>
<accession>A0A0A2JB87</accession>
<dbReference type="EC" id="4.2.3.9" evidence="3"/>
<dbReference type="EMBL" id="JQFZ01000261">
    <property type="protein sequence ID" value="KGO52657.1"/>
    <property type="molecule type" value="Genomic_DNA"/>
</dbReference>
<dbReference type="RefSeq" id="XP_016595385.1">
    <property type="nucleotide sequence ID" value="XM_016745457.1"/>
</dbReference>
<dbReference type="SMR" id="A0A0A2JB87"/>
<dbReference type="STRING" id="27334.A0A0A2JB87"/>
<dbReference type="GeneID" id="27680877"/>
<dbReference type="VEuPathDB" id="FungiDB:PEXP_040240"/>
<dbReference type="HOGENOM" id="CLU_057570_1_0_1"/>
<dbReference type="UniPathway" id="UPA00177">
    <property type="reaction ID" value="UER00582"/>
</dbReference>
<dbReference type="Proteomes" id="UP000030143">
    <property type="component" value="Unassembled WGS sequence"/>
</dbReference>
<dbReference type="GO" id="GO:0046872">
    <property type="term" value="F:metal ion binding"/>
    <property type="evidence" value="ECO:0007669"/>
    <property type="project" value="UniProtKB-KW"/>
</dbReference>
<dbReference type="GO" id="GO:0010333">
    <property type="term" value="F:terpene synthase activity"/>
    <property type="evidence" value="ECO:0007669"/>
    <property type="project" value="InterPro"/>
</dbReference>
<dbReference type="GO" id="GO:0008299">
    <property type="term" value="P:isoprenoid biosynthetic process"/>
    <property type="evidence" value="ECO:0007669"/>
    <property type="project" value="UniProtKB-ARBA"/>
</dbReference>
<dbReference type="Gene3D" id="1.10.600.10">
    <property type="entry name" value="Farnesyl Diphosphate Synthase"/>
    <property type="match status" value="1"/>
</dbReference>
<dbReference type="InterPro" id="IPR008949">
    <property type="entry name" value="Isoprenoid_synthase_dom_sf"/>
</dbReference>
<dbReference type="InterPro" id="IPR034686">
    <property type="entry name" value="Terpene_cyclase-like_2"/>
</dbReference>
<dbReference type="PANTHER" id="PTHR35201:SF4">
    <property type="entry name" value="BETA-PINACENE SYNTHASE-RELATED"/>
    <property type="match status" value="1"/>
</dbReference>
<dbReference type="PANTHER" id="PTHR35201">
    <property type="entry name" value="TERPENE SYNTHASE"/>
    <property type="match status" value="1"/>
</dbReference>
<dbReference type="Pfam" id="PF19086">
    <property type="entry name" value="Terpene_syn_C_2"/>
    <property type="match status" value="1"/>
</dbReference>
<dbReference type="SUPFAM" id="SSF48576">
    <property type="entry name" value="Terpenoid synthases"/>
    <property type="match status" value="1"/>
</dbReference>
<protein>
    <recommendedName>
        <fullName evidence="4">(+)-aristolochene synthase TS1</fullName>
        <ecNumber evidence="3">4.2.3.9</ecNumber>
    </recommendedName>
    <alternativeName>
        <fullName evidence="4">Sesquiterpene synthase TS1</fullName>
    </alternativeName>
</protein>
<reference key="1">
    <citation type="journal article" date="2015" name="Mol. Plant Microbe Interact.">
        <title>Genome, transcriptome, and functional analyses of Penicillium expansum provide new insights into secondary metabolism and pathogenicity.</title>
        <authorList>
            <person name="Ballester A.R."/>
            <person name="Marcet-Houben M."/>
            <person name="Levin E."/>
            <person name="Sela N."/>
            <person name="Selma-Lazaro C."/>
            <person name="Carmona L."/>
            <person name="Wisniewski M."/>
            <person name="Droby S."/>
            <person name="Gonzalez-Candelas L."/>
            <person name="Gabaldon T."/>
        </authorList>
    </citation>
    <scope>NUCLEOTIDE SEQUENCE [LARGE SCALE GENOMIC DNA]</scope>
    <source>
        <strain>MD-8</strain>
    </source>
</reference>
<reference key="2">
    <citation type="journal article" date="2022" name="J. Agric. Food Chem.">
        <title>Facile production of (+)-aristolochene and (+)-bicyclogermacrene in Escherichia coli using newly discovered sesquiterpene synthases from Penicillium expansum.</title>
        <authorList>
            <person name="Huang Z.Y."/>
            <person name="Wu Q.Y."/>
            <person name="Li C.X."/>
            <person name="Yu H.L."/>
            <person name="Xu J.H."/>
        </authorList>
    </citation>
    <scope>FUNCTION</scope>
    <scope>CATALYTIC ACTIVITY</scope>
</reference>
<organism>
    <name type="scientific">Penicillium expansum</name>
    <name type="common">Blue mold rot fungus</name>
    <dbReference type="NCBI Taxonomy" id="27334"/>
    <lineage>
        <taxon>Eukaryota</taxon>
        <taxon>Fungi</taxon>
        <taxon>Dikarya</taxon>
        <taxon>Ascomycota</taxon>
        <taxon>Pezizomycotina</taxon>
        <taxon>Eurotiomycetes</taxon>
        <taxon>Eurotiomycetidae</taxon>
        <taxon>Eurotiales</taxon>
        <taxon>Aspergillaceae</taxon>
        <taxon>Penicillium</taxon>
    </lineage>
</organism>
<comment type="function">
    <text evidence="1 3">Catalyzes the cyclization of trans,trans-farnesyl diphosphate (FPP) to the bicyclic sesquiterpene aristolochene (PubMed:35506591). Aristolochene is the likely parent compound for a number of sesquiterpenoid toxins produced by filamentous fungi (By similarity).</text>
</comment>
<comment type="catalytic activity">
    <reaction evidence="3">
        <text>(2E,6E)-farnesyl diphosphate = (+)-aristolochene + diphosphate</text>
        <dbReference type="Rhea" id="RHEA:19825"/>
        <dbReference type="ChEBI" id="CHEBI:33019"/>
        <dbReference type="ChEBI" id="CHEBI:43445"/>
        <dbReference type="ChEBI" id="CHEBI:175763"/>
        <dbReference type="EC" id="4.2.3.9"/>
    </reaction>
    <physiologicalReaction direction="left-to-right" evidence="3">
        <dbReference type="Rhea" id="RHEA:19826"/>
    </physiologicalReaction>
</comment>
<comment type="cofactor">
    <cofactor evidence="1">
        <name>Mg(2+)</name>
        <dbReference type="ChEBI" id="CHEBI:18420"/>
    </cofactor>
    <text evidence="1">Binds 3 Mg(2+) ions per monomer.</text>
</comment>
<comment type="pathway">
    <text evidence="3">Sesquiterpene biosynthesis; aristolochene biosynthesis; aristolochene from farnesyl diphosphate: step 1/1.</text>
</comment>
<comment type="subunit">
    <text evidence="1">Homodimer.</text>
</comment>
<comment type="domain">
    <text evidence="6">Contains several highly conserved motifs that are important for catalytic activity including the aspartate-rich 'DDxx(x)D/E' motif and the 'NDxxSxxxD/E' motif, both of which are involved in complexing Mg(2+) ions to coordinate the binding of the isoprenyl diphosphate substrate in the active site.</text>
</comment>
<comment type="similarity">
    <text evidence="5">Belongs to the terpene synthase family.</text>
</comment>
<keyword id="KW-0456">Lyase</keyword>
<keyword id="KW-0460">Magnesium</keyword>
<keyword id="KW-0479">Metal-binding</keyword>
<keyword id="KW-1185">Reference proteome</keyword>
<sequence>MTRMKNSSSNVTSASGSGSGSGGFVQPLPASLLQPICHPRVTEVTSEVNDYFLTHWDFPSEKLRKKFVAADFPGVTCLYFPNALDDRISFACRLLTVLFLIDDLLEFMSLEQGSAYNEKLIPISRGDVLPDRSVPVEYITYDLWESMRGHDRSMANEILEPVFVFMRAQTDRTRIRPMGLGSYLEYRERDVGKALLAALMRFSMALHVSPVELTILGEIDVNCSKHLSVINDVYSYEKELRASKTAHAEGGALCTSVRILADEMAISIEAAKRVLVFMCREWELRHQVLVEELRADGRQSASLTAYVKGLEFQMSGNEEWSKTTLRYNNVV</sequence>
<gene>
    <name evidence="4" type="primary">TS1</name>
    <name type="ORF">PEX2_081870</name>
</gene>
<feature type="chain" id="PRO_0000456586" description="(+)-aristolochene synthase TS1">
    <location>
        <begin position="1"/>
        <end position="331"/>
    </location>
</feature>
<feature type="region of interest" description="Disordered" evidence="2">
    <location>
        <begin position="1"/>
        <end position="22"/>
    </location>
</feature>
<feature type="short sequence motif" description="DDxx(x)D/E motif" evidence="6">
    <location>
        <begin position="102"/>
        <end position="106"/>
    </location>
</feature>
<feature type="short sequence motif" description="NDxxSxxxD/E motif" evidence="6">
    <location>
        <begin position="231"/>
        <end position="239"/>
    </location>
</feature>
<feature type="compositionally biased region" description="Low complexity" evidence="2">
    <location>
        <begin position="7"/>
        <end position="16"/>
    </location>
</feature>
<feature type="binding site" evidence="1">
    <location>
        <position position="102"/>
    </location>
    <ligand>
        <name>Mg(2+)</name>
        <dbReference type="ChEBI" id="CHEBI:18420"/>
        <label>1</label>
    </ligand>
</feature>
<feature type="binding site" evidence="1">
    <location>
        <position position="102"/>
    </location>
    <ligand>
        <name>Mg(2+)</name>
        <dbReference type="ChEBI" id="CHEBI:18420"/>
        <label>2</label>
    </ligand>
</feature>
<feature type="binding site" evidence="1">
    <location>
        <position position="231"/>
    </location>
    <ligand>
        <name>Mg(2+)</name>
        <dbReference type="ChEBI" id="CHEBI:18420"/>
        <label>3</label>
    </ligand>
</feature>
<feature type="binding site" evidence="1">
    <location>
        <position position="235"/>
    </location>
    <ligand>
        <name>Mg(2+)</name>
        <dbReference type="ChEBI" id="CHEBI:18420"/>
        <label>3</label>
    </ligand>
</feature>
<feature type="binding site" evidence="1">
    <location>
        <position position="239"/>
    </location>
    <ligand>
        <name>Mg(2+)</name>
        <dbReference type="ChEBI" id="CHEBI:18420"/>
        <label>3</label>
    </ligand>
</feature>
<feature type="binding site" evidence="1">
    <location>
        <position position="326"/>
    </location>
    <ligand>
        <name>(2E,6E)-farnesyl diphosphate</name>
        <dbReference type="ChEBI" id="CHEBI:175763"/>
    </ligand>
</feature>
<feature type="binding site" evidence="1">
    <location>
        <position position="327"/>
    </location>
    <ligand>
        <name>(2E,6E)-farnesyl diphosphate</name>
        <dbReference type="ChEBI" id="CHEBI:175763"/>
    </ligand>
</feature>
<name>TS1_PENEN</name>
<proteinExistence type="evidence at protein level"/>